<name>FOLD_DEIRA</name>
<evidence type="ECO:0000255" key="1">
    <source>
        <dbReference type="HAMAP-Rule" id="MF_01576"/>
    </source>
</evidence>
<protein>
    <recommendedName>
        <fullName evidence="1">Bifunctional protein FolD</fullName>
    </recommendedName>
    <domain>
        <recommendedName>
            <fullName evidence="1">Methylenetetrahydrofolate dehydrogenase</fullName>
            <ecNumber evidence="1">1.5.1.5</ecNumber>
        </recommendedName>
    </domain>
    <domain>
        <recommendedName>
            <fullName evidence="1">Methenyltetrahydrofolate cyclohydrolase</fullName>
            <ecNumber evidence="1">3.5.4.9</ecNumber>
        </recommendedName>
    </domain>
</protein>
<comment type="function">
    <text evidence="1">Catalyzes the oxidation of 5,10-methylenetetrahydrofolate to 5,10-methenyltetrahydrofolate and then the hydrolysis of 5,10-methenyltetrahydrofolate to 10-formyltetrahydrofolate.</text>
</comment>
<comment type="catalytic activity">
    <reaction evidence="1">
        <text>(6R)-5,10-methylene-5,6,7,8-tetrahydrofolate + NADP(+) = (6R)-5,10-methenyltetrahydrofolate + NADPH</text>
        <dbReference type="Rhea" id="RHEA:22812"/>
        <dbReference type="ChEBI" id="CHEBI:15636"/>
        <dbReference type="ChEBI" id="CHEBI:57455"/>
        <dbReference type="ChEBI" id="CHEBI:57783"/>
        <dbReference type="ChEBI" id="CHEBI:58349"/>
        <dbReference type="EC" id="1.5.1.5"/>
    </reaction>
</comment>
<comment type="catalytic activity">
    <reaction evidence="1">
        <text>(6R)-5,10-methenyltetrahydrofolate + H2O = (6R)-10-formyltetrahydrofolate + H(+)</text>
        <dbReference type="Rhea" id="RHEA:23700"/>
        <dbReference type="ChEBI" id="CHEBI:15377"/>
        <dbReference type="ChEBI" id="CHEBI:15378"/>
        <dbReference type="ChEBI" id="CHEBI:57455"/>
        <dbReference type="ChEBI" id="CHEBI:195366"/>
        <dbReference type="EC" id="3.5.4.9"/>
    </reaction>
</comment>
<comment type="pathway">
    <text evidence="1">One-carbon metabolism; tetrahydrofolate interconversion.</text>
</comment>
<comment type="subunit">
    <text evidence="1">Homodimer.</text>
</comment>
<comment type="similarity">
    <text evidence="1">Belongs to the tetrahydrofolate dehydrogenase/cyclohydrolase family.</text>
</comment>
<dbReference type="EC" id="1.5.1.5" evidence="1"/>
<dbReference type="EC" id="3.5.4.9" evidence="1"/>
<dbReference type="EMBL" id="AE000513">
    <property type="protein sequence ID" value="AAF10443.1"/>
    <property type="molecule type" value="Genomic_DNA"/>
</dbReference>
<dbReference type="PIR" id="A75467">
    <property type="entry name" value="A75467"/>
</dbReference>
<dbReference type="RefSeq" id="NP_294591.1">
    <property type="nucleotide sequence ID" value="NC_001263.1"/>
</dbReference>
<dbReference type="RefSeq" id="WP_010887513.1">
    <property type="nucleotide sequence ID" value="NC_001263.1"/>
</dbReference>
<dbReference type="SMR" id="Q9RW02"/>
<dbReference type="FunCoup" id="Q9RW02">
    <property type="interactions" value="365"/>
</dbReference>
<dbReference type="STRING" id="243230.DR_0867"/>
<dbReference type="PaxDb" id="243230-DR_0867"/>
<dbReference type="EnsemblBacteria" id="AAF10443">
    <property type="protein sequence ID" value="AAF10443"/>
    <property type="gene ID" value="DR_0867"/>
</dbReference>
<dbReference type="GeneID" id="69517113"/>
<dbReference type="KEGG" id="dra:DR_0867"/>
<dbReference type="PATRIC" id="fig|243230.17.peg.1051"/>
<dbReference type="eggNOG" id="COG0190">
    <property type="taxonomic scope" value="Bacteria"/>
</dbReference>
<dbReference type="HOGENOM" id="CLU_034045_2_1_0"/>
<dbReference type="InParanoid" id="Q9RW02"/>
<dbReference type="OrthoDB" id="9803580at2"/>
<dbReference type="UniPathway" id="UPA00193"/>
<dbReference type="Proteomes" id="UP000002524">
    <property type="component" value="Chromosome 1"/>
</dbReference>
<dbReference type="GO" id="GO:0005829">
    <property type="term" value="C:cytosol"/>
    <property type="evidence" value="ECO:0000318"/>
    <property type="project" value="GO_Central"/>
</dbReference>
<dbReference type="GO" id="GO:0004477">
    <property type="term" value="F:methenyltetrahydrofolate cyclohydrolase activity"/>
    <property type="evidence" value="ECO:0000318"/>
    <property type="project" value="GO_Central"/>
</dbReference>
<dbReference type="GO" id="GO:0004488">
    <property type="term" value="F:methylenetetrahydrofolate dehydrogenase (NADP+) activity"/>
    <property type="evidence" value="ECO:0000318"/>
    <property type="project" value="GO_Central"/>
</dbReference>
<dbReference type="GO" id="GO:0000105">
    <property type="term" value="P:L-histidine biosynthetic process"/>
    <property type="evidence" value="ECO:0007669"/>
    <property type="project" value="UniProtKB-KW"/>
</dbReference>
<dbReference type="GO" id="GO:0009086">
    <property type="term" value="P:methionine biosynthetic process"/>
    <property type="evidence" value="ECO:0007669"/>
    <property type="project" value="UniProtKB-KW"/>
</dbReference>
<dbReference type="GO" id="GO:0006164">
    <property type="term" value="P:purine nucleotide biosynthetic process"/>
    <property type="evidence" value="ECO:0007669"/>
    <property type="project" value="UniProtKB-KW"/>
</dbReference>
<dbReference type="GO" id="GO:0035999">
    <property type="term" value="P:tetrahydrofolate interconversion"/>
    <property type="evidence" value="ECO:0000318"/>
    <property type="project" value="GO_Central"/>
</dbReference>
<dbReference type="FunFam" id="3.40.50.10860:FF:000005">
    <property type="entry name" value="C-1-tetrahydrofolate synthase, cytoplasmic, putative"/>
    <property type="match status" value="1"/>
</dbReference>
<dbReference type="Gene3D" id="3.40.50.10860">
    <property type="entry name" value="Leucine Dehydrogenase, chain A, domain 1"/>
    <property type="match status" value="1"/>
</dbReference>
<dbReference type="Gene3D" id="3.40.50.720">
    <property type="entry name" value="NAD(P)-binding Rossmann-like Domain"/>
    <property type="match status" value="1"/>
</dbReference>
<dbReference type="HAMAP" id="MF_01576">
    <property type="entry name" value="THF_DHG_CYH"/>
    <property type="match status" value="1"/>
</dbReference>
<dbReference type="InterPro" id="IPR046346">
    <property type="entry name" value="Aminoacid_DH-like_N_sf"/>
</dbReference>
<dbReference type="InterPro" id="IPR036291">
    <property type="entry name" value="NAD(P)-bd_dom_sf"/>
</dbReference>
<dbReference type="InterPro" id="IPR000672">
    <property type="entry name" value="THF_DH/CycHdrlase"/>
</dbReference>
<dbReference type="InterPro" id="IPR020630">
    <property type="entry name" value="THF_DH/CycHdrlase_cat_dom"/>
</dbReference>
<dbReference type="InterPro" id="IPR020631">
    <property type="entry name" value="THF_DH/CycHdrlase_NAD-bd_dom"/>
</dbReference>
<dbReference type="PANTHER" id="PTHR48099:SF5">
    <property type="entry name" value="C-1-TETRAHYDROFOLATE SYNTHASE, CYTOPLASMIC"/>
    <property type="match status" value="1"/>
</dbReference>
<dbReference type="PANTHER" id="PTHR48099">
    <property type="entry name" value="C-1-TETRAHYDROFOLATE SYNTHASE, CYTOPLASMIC-RELATED"/>
    <property type="match status" value="1"/>
</dbReference>
<dbReference type="Pfam" id="PF00763">
    <property type="entry name" value="THF_DHG_CYH"/>
    <property type="match status" value="1"/>
</dbReference>
<dbReference type="Pfam" id="PF02882">
    <property type="entry name" value="THF_DHG_CYH_C"/>
    <property type="match status" value="1"/>
</dbReference>
<dbReference type="PRINTS" id="PR00085">
    <property type="entry name" value="THFDHDRGNASE"/>
</dbReference>
<dbReference type="SUPFAM" id="SSF53223">
    <property type="entry name" value="Aminoacid dehydrogenase-like, N-terminal domain"/>
    <property type="match status" value="1"/>
</dbReference>
<dbReference type="SUPFAM" id="SSF51735">
    <property type="entry name" value="NAD(P)-binding Rossmann-fold domains"/>
    <property type="match status" value="1"/>
</dbReference>
<proteinExistence type="inferred from homology"/>
<feature type="chain" id="PRO_0000268334" description="Bifunctional protein FolD">
    <location>
        <begin position="1"/>
        <end position="299"/>
    </location>
</feature>
<feature type="binding site" evidence="1">
    <location>
        <begin position="179"/>
        <end position="181"/>
    </location>
    <ligand>
        <name>NADP(+)</name>
        <dbReference type="ChEBI" id="CHEBI:58349"/>
    </ligand>
</feature>
<feature type="binding site" evidence="1">
    <location>
        <position position="245"/>
    </location>
    <ligand>
        <name>NADP(+)</name>
        <dbReference type="ChEBI" id="CHEBI:58349"/>
    </ligand>
</feature>
<sequence length="299" mass="31408">MQTSSEPAASETAALLGKPLADRVMRGVRADLKAWAQLDPPFEPQLVSVLASDDEASQVYVQSKAKRAKKLGVAFRVVDLGAAATQEALEQTLRELSADPAVHGIVLELPLAAGLDADAALLHIAARKDIEGLSPANLALIAAGREPEALLPPTPRSVRFLLRHALGDDLRGLRVAVIGPGRTVGRPLLFMLNNKGATVTLCNEHTRDLAAVLAAQDAVVVAVGKAGLLRPEQVQPEHVVIDAGINVQESGDMVGDALPELPVRAQTPVPGGVGPLTSALMYQNLVRGVKLQRGEPVDD</sequence>
<accession>Q9RW02</accession>
<keyword id="KW-0028">Amino-acid biosynthesis</keyword>
<keyword id="KW-0368">Histidine biosynthesis</keyword>
<keyword id="KW-0378">Hydrolase</keyword>
<keyword id="KW-0486">Methionine biosynthesis</keyword>
<keyword id="KW-0511">Multifunctional enzyme</keyword>
<keyword id="KW-0521">NADP</keyword>
<keyword id="KW-0554">One-carbon metabolism</keyword>
<keyword id="KW-0560">Oxidoreductase</keyword>
<keyword id="KW-0658">Purine biosynthesis</keyword>
<keyword id="KW-1185">Reference proteome</keyword>
<gene>
    <name evidence="1" type="primary">folD</name>
    <name type="ordered locus">DR_0867</name>
</gene>
<reference key="1">
    <citation type="journal article" date="1999" name="Science">
        <title>Genome sequence of the radioresistant bacterium Deinococcus radiodurans R1.</title>
        <authorList>
            <person name="White O."/>
            <person name="Eisen J.A."/>
            <person name="Heidelberg J.F."/>
            <person name="Hickey E.K."/>
            <person name="Peterson J.D."/>
            <person name="Dodson R.J."/>
            <person name="Haft D.H."/>
            <person name="Gwinn M.L."/>
            <person name="Nelson W.C."/>
            <person name="Richardson D.L."/>
            <person name="Moffat K.S."/>
            <person name="Qin H."/>
            <person name="Jiang L."/>
            <person name="Pamphile W."/>
            <person name="Crosby M."/>
            <person name="Shen M."/>
            <person name="Vamathevan J.J."/>
            <person name="Lam P."/>
            <person name="McDonald L.A."/>
            <person name="Utterback T.R."/>
            <person name="Zalewski C."/>
            <person name="Makarova K.S."/>
            <person name="Aravind L."/>
            <person name="Daly M.J."/>
            <person name="Minton K.W."/>
            <person name="Fleischmann R.D."/>
            <person name="Ketchum K.A."/>
            <person name="Nelson K.E."/>
            <person name="Salzberg S.L."/>
            <person name="Smith H.O."/>
            <person name="Venter J.C."/>
            <person name="Fraser C.M."/>
        </authorList>
    </citation>
    <scope>NUCLEOTIDE SEQUENCE [LARGE SCALE GENOMIC DNA]</scope>
    <source>
        <strain>ATCC 13939 / DSM 20539 / JCM 16871 / CCUG 27074 / LMG 4051 / NBRC 15346 / NCIMB 9279 / VKM B-1422 / R1</strain>
    </source>
</reference>
<organism>
    <name type="scientific">Deinococcus radiodurans (strain ATCC 13939 / DSM 20539 / JCM 16871 / CCUG 27074 / LMG 4051 / NBRC 15346 / NCIMB 9279 / VKM B-1422 / R1)</name>
    <dbReference type="NCBI Taxonomy" id="243230"/>
    <lineage>
        <taxon>Bacteria</taxon>
        <taxon>Thermotogati</taxon>
        <taxon>Deinococcota</taxon>
        <taxon>Deinococci</taxon>
        <taxon>Deinococcales</taxon>
        <taxon>Deinococcaceae</taxon>
        <taxon>Deinococcus</taxon>
    </lineage>
</organism>